<name>KTHY_STRP2</name>
<organism>
    <name type="scientific">Streptococcus pneumoniae serotype 2 (strain D39 / NCTC 7466)</name>
    <dbReference type="NCBI Taxonomy" id="373153"/>
    <lineage>
        <taxon>Bacteria</taxon>
        <taxon>Bacillati</taxon>
        <taxon>Bacillota</taxon>
        <taxon>Bacilli</taxon>
        <taxon>Lactobacillales</taxon>
        <taxon>Streptococcaceae</taxon>
        <taxon>Streptococcus</taxon>
    </lineage>
</organism>
<evidence type="ECO:0000255" key="1">
    <source>
        <dbReference type="HAMAP-Rule" id="MF_00165"/>
    </source>
</evidence>
<accession>Q04KZ0</accession>
<proteinExistence type="inferred from homology"/>
<comment type="function">
    <text evidence="1">Phosphorylation of dTMP to form dTDP in both de novo and salvage pathways of dTTP synthesis.</text>
</comment>
<comment type="catalytic activity">
    <reaction evidence="1">
        <text>dTMP + ATP = dTDP + ADP</text>
        <dbReference type="Rhea" id="RHEA:13517"/>
        <dbReference type="ChEBI" id="CHEBI:30616"/>
        <dbReference type="ChEBI" id="CHEBI:58369"/>
        <dbReference type="ChEBI" id="CHEBI:63528"/>
        <dbReference type="ChEBI" id="CHEBI:456216"/>
        <dbReference type="EC" id="2.7.4.9"/>
    </reaction>
</comment>
<comment type="similarity">
    <text evidence="1">Belongs to the thymidylate kinase family.</text>
</comment>
<gene>
    <name evidence="1" type="primary">tmk</name>
    <name type="ordered locus">SPD_0825</name>
</gene>
<keyword id="KW-0067">ATP-binding</keyword>
<keyword id="KW-0418">Kinase</keyword>
<keyword id="KW-0545">Nucleotide biosynthesis</keyword>
<keyword id="KW-0547">Nucleotide-binding</keyword>
<keyword id="KW-1185">Reference proteome</keyword>
<keyword id="KW-0808">Transferase</keyword>
<protein>
    <recommendedName>
        <fullName evidence="1">Thymidylate kinase</fullName>
        <ecNumber evidence="1">2.7.4.9</ecNumber>
    </recommendedName>
    <alternativeName>
        <fullName evidence="1">dTMP kinase</fullName>
    </alternativeName>
</protein>
<feature type="chain" id="PRO_1000023294" description="Thymidylate kinase">
    <location>
        <begin position="1"/>
        <end position="212"/>
    </location>
</feature>
<feature type="binding site" evidence="1">
    <location>
        <begin position="11"/>
        <end position="18"/>
    </location>
    <ligand>
        <name>ATP</name>
        <dbReference type="ChEBI" id="CHEBI:30616"/>
    </ligand>
</feature>
<reference key="1">
    <citation type="journal article" date="2007" name="J. Bacteriol.">
        <title>Genome sequence of Avery's virulent serotype 2 strain D39 of Streptococcus pneumoniae and comparison with that of unencapsulated laboratory strain R6.</title>
        <authorList>
            <person name="Lanie J.A."/>
            <person name="Ng W.-L."/>
            <person name="Kazmierczak K.M."/>
            <person name="Andrzejewski T.M."/>
            <person name="Davidsen T.M."/>
            <person name="Wayne K.J."/>
            <person name="Tettelin H."/>
            <person name="Glass J.I."/>
            <person name="Winkler M.E."/>
        </authorList>
    </citation>
    <scope>NUCLEOTIDE SEQUENCE [LARGE SCALE GENOMIC DNA]</scope>
    <source>
        <strain>D39 / NCTC 7466</strain>
    </source>
</reference>
<dbReference type="EC" id="2.7.4.9" evidence="1"/>
<dbReference type="EMBL" id="CP000410">
    <property type="protein sequence ID" value="ABJ54857.1"/>
    <property type="molecule type" value="Genomic_DNA"/>
</dbReference>
<dbReference type="RefSeq" id="WP_000033364.1">
    <property type="nucleotide sequence ID" value="NZ_JAMLJR010000004.1"/>
</dbReference>
<dbReference type="SMR" id="Q04KZ0"/>
<dbReference type="PaxDb" id="373153-SPD_0825"/>
<dbReference type="KEGG" id="spd:SPD_0825"/>
<dbReference type="eggNOG" id="COG0125">
    <property type="taxonomic scope" value="Bacteria"/>
</dbReference>
<dbReference type="HOGENOM" id="CLU_049131_0_2_9"/>
<dbReference type="BioCyc" id="SPNE373153:G1G6V-904-MONOMER"/>
<dbReference type="Proteomes" id="UP000001452">
    <property type="component" value="Chromosome"/>
</dbReference>
<dbReference type="GO" id="GO:0005829">
    <property type="term" value="C:cytosol"/>
    <property type="evidence" value="ECO:0007669"/>
    <property type="project" value="TreeGrafter"/>
</dbReference>
<dbReference type="GO" id="GO:0005524">
    <property type="term" value="F:ATP binding"/>
    <property type="evidence" value="ECO:0007669"/>
    <property type="project" value="UniProtKB-UniRule"/>
</dbReference>
<dbReference type="GO" id="GO:0004798">
    <property type="term" value="F:dTMP kinase activity"/>
    <property type="evidence" value="ECO:0007669"/>
    <property type="project" value="UniProtKB-UniRule"/>
</dbReference>
<dbReference type="GO" id="GO:0006233">
    <property type="term" value="P:dTDP biosynthetic process"/>
    <property type="evidence" value="ECO:0007669"/>
    <property type="project" value="InterPro"/>
</dbReference>
<dbReference type="GO" id="GO:0006235">
    <property type="term" value="P:dTTP biosynthetic process"/>
    <property type="evidence" value="ECO:0007669"/>
    <property type="project" value="UniProtKB-UniRule"/>
</dbReference>
<dbReference type="GO" id="GO:0006227">
    <property type="term" value="P:dUDP biosynthetic process"/>
    <property type="evidence" value="ECO:0007669"/>
    <property type="project" value="TreeGrafter"/>
</dbReference>
<dbReference type="CDD" id="cd01672">
    <property type="entry name" value="TMPK"/>
    <property type="match status" value="1"/>
</dbReference>
<dbReference type="FunFam" id="3.40.50.300:FF:000225">
    <property type="entry name" value="Thymidylate kinase"/>
    <property type="match status" value="1"/>
</dbReference>
<dbReference type="Gene3D" id="3.40.50.300">
    <property type="entry name" value="P-loop containing nucleotide triphosphate hydrolases"/>
    <property type="match status" value="1"/>
</dbReference>
<dbReference type="HAMAP" id="MF_00165">
    <property type="entry name" value="Thymidylate_kinase"/>
    <property type="match status" value="1"/>
</dbReference>
<dbReference type="InterPro" id="IPR027417">
    <property type="entry name" value="P-loop_NTPase"/>
</dbReference>
<dbReference type="InterPro" id="IPR039430">
    <property type="entry name" value="Thymidylate_kin-like_dom"/>
</dbReference>
<dbReference type="InterPro" id="IPR018095">
    <property type="entry name" value="Thymidylate_kin_CS"/>
</dbReference>
<dbReference type="InterPro" id="IPR018094">
    <property type="entry name" value="Thymidylate_kinase"/>
</dbReference>
<dbReference type="NCBIfam" id="TIGR00041">
    <property type="entry name" value="DTMP_kinase"/>
    <property type="match status" value="1"/>
</dbReference>
<dbReference type="PANTHER" id="PTHR10344">
    <property type="entry name" value="THYMIDYLATE KINASE"/>
    <property type="match status" value="1"/>
</dbReference>
<dbReference type="PANTHER" id="PTHR10344:SF4">
    <property type="entry name" value="UMP-CMP KINASE 2, MITOCHONDRIAL"/>
    <property type="match status" value="1"/>
</dbReference>
<dbReference type="Pfam" id="PF02223">
    <property type="entry name" value="Thymidylate_kin"/>
    <property type="match status" value="1"/>
</dbReference>
<dbReference type="SUPFAM" id="SSF52540">
    <property type="entry name" value="P-loop containing nucleoside triphosphate hydrolases"/>
    <property type="match status" value="1"/>
</dbReference>
<dbReference type="PROSITE" id="PS01331">
    <property type="entry name" value="THYMIDYLATE_KINASE"/>
    <property type="match status" value="1"/>
</dbReference>
<sequence length="212" mass="23339">MSKGFLVSLEGPEGAGKTSVLEALLPILEEKGVEVLTTREPGGVLIGEKIREVILDPSHTQMDAKTELLLYIASRRQHLVEKVLPALEAGKLVIMDRFIDSSVAYQGFGRGLDIEAIDWLNQFATDGLKPDLTLYFDIEVEEGLARIAANSDREVNRLDLEGLDLHKKVRQGYLSLLDKEGNRIVKIDASLPLEQVVETTNAVLFDGMGLAK</sequence>